<name>FKB62_ARATH</name>
<protein>
    <recommendedName>
        <fullName>Peptidyl-prolyl cis-trans isomerase FKBP62</fullName>
        <shortName>PPIase FKBP62</shortName>
        <ecNumber>5.2.1.8</ecNumber>
    </recommendedName>
    <alternativeName>
        <fullName>70 kDa peptidyl-prolyl isomerase</fullName>
    </alternativeName>
    <alternativeName>
        <fullName>FK506-binding protein 62</fullName>
        <shortName>AtFKBP62</shortName>
    </alternativeName>
    <alternativeName>
        <fullName>Immunophilin FKBP62</fullName>
    </alternativeName>
    <alternativeName>
        <fullName>Peptidylprolyl isomerase ROF1</fullName>
    </alternativeName>
    <alternativeName>
        <fullName>Protein ROTAMASE FKBP 1</fullName>
    </alternativeName>
    <alternativeName>
        <fullName>Rotamase</fullName>
    </alternativeName>
</protein>
<keyword id="KW-0007">Acetylation</keyword>
<keyword id="KW-0025">Alternative splicing</keyword>
<keyword id="KW-0112">Calmodulin-binding</keyword>
<keyword id="KW-0143">Chaperone</keyword>
<keyword id="KW-0963">Cytoplasm</keyword>
<keyword id="KW-0413">Isomerase</keyword>
<keyword id="KW-0539">Nucleus</keyword>
<keyword id="KW-1185">Reference proteome</keyword>
<keyword id="KW-0677">Repeat</keyword>
<keyword id="KW-0697">Rotamase</keyword>
<keyword id="KW-0802">TPR repeat</keyword>
<feature type="chain" id="PRO_0000075333" description="Peptidyl-prolyl cis-trans isomerase FKBP62">
    <location>
        <begin position="1"/>
        <end position="551"/>
    </location>
</feature>
<feature type="domain" description="PPIase FKBP-type 1" evidence="3">
    <location>
        <begin position="57"/>
        <end position="145"/>
    </location>
</feature>
<feature type="domain" description="PPIase FKBP-type 2" evidence="3">
    <location>
        <begin position="173"/>
        <end position="262"/>
    </location>
</feature>
<feature type="domain" description="PPIase FKBP-type 3" evidence="3">
    <location>
        <begin position="290"/>
        <end position="383"/>
    </location>
</feature>
<feature type="repeat" description="TPR 1">
    <location>
        <begin position="400"/>
        <end position="433"/>
    </location>
</feature>
<feature type="repeat" description="TPR 2">
    <location>
        <begin position="449"/>
        <end position="482"/>
    </location>
</feature>
<feature type="repeat" description="TPR 3">
    <location>
        <begin position="483"/>
        <end position="516"/>
    </location>
</feature>
<feature type="region of interest" description="Disordered" evidence="4">
    <location>
        <begin position="1"/>
        <end position="24"/>
    </location>
</feature>
<feature type="region of interest" description="Calmodulin-binding" evidence="2">
    <location>
        <begin position="529"/>
        <end position="545"/>
    </location>
</feature>
<feature type="modified residue" description="N-acetylmethionine" evidence="10">
    <location>
        <position position="1"/>
    </location>
</feature>
<feature type="mutagenesis site" description="Reduces interaction with HSP90." evidence="5">
    <original>K</original>
    <variation>A</variation>
    <location>
        <position position="484"/>
    </location>
</feature>
<feature type="sequence conflict" description="In Ref. 1; AAB82061." evidence="9" ref="1">
    <original>I</original>
    <variation>V</variation>
    <location>
        <position position="430"/>
    </location>
</feature>
<reference key="1">
    <citation type="journal article" date="1996" name="Mol. Gen. Genet.">
        <title>Novel structure of a high molecular weight FK506 binding protein from Arabidopsis thaliana.</title>
        <authorList>
            <person name="Vucich V.A."/>
            <person name="Gasser C.S."/>
        </authorList>
    </citation>
    <scope>NUCLEOTIDE SEQUENCE [GENOMIC DNA / MRNA]</scope>
    <scope>TISSUE SPECIFICITY</scope>
    <scope>INDUCTION BY WOUNDING AND SODIUM CHLORIDE</scope>
</reference>
<reference key="2">
    <citation type="journal article" date="2000" name="DNA Res.">
        <title>Structural analysis of Arabidopsis thaliana chromosome 3. I. Sequence features of the regions of 4,504,864 bp covered by sixty P1 and TAC clones.</title>
        <authorList>
            <person name="Sato S."/>
            <person name="Nakamura Y."/>
            <person name="Kaneko T."/>
            <person name="Katoh T."/>
            <person name="Asamizu E."/>
            <person name="Tabata S."/>
        </authorList>
    </citation>
    <scope>NUCLEOTIDE SEQUENCE [LARGE SCALE GENOMIC DNA]</scope>
    <source>
        <strain>cv. Columbia</strain>
    </source>
</reference>
<reference key="3">
    <citation type="journal article" date="2017" name="Plant J.">
        <title>Araport11: a complete reannotation of the Arabidopsis thaliana reference genome.</title>
        <authorList>
            <person name="Cheng C.Y."/>
            <person name="Krishnakumar V."/>
            <person name="Chan A.P."/>
            <person name="Thibaud-Nissen F."/>
            <person name="Schobel S."/>
            <person name="Town C.D."/>
        </authorList>
    </citation>
    <scope>GENOME REANNOTATION</scope>
    <source>
        <strain>cv. Columbia</strain>
    </source>
</reference>
<reference key="4">
    <citation type="journal article" date="2002" name="J. Biol. Chem.">
        <title>Genes encoding calmodulin-binding proteins in the Arabidopsis genome.</title>
        <authorList>
            <person name="Reddy V.S."/>
            <person name="Ali G.S."/>
            <person name="Reddy A.S.N."/>
        </authorList>
    </citation>
    <scope>POSSIBLE INTERACTION WITH CALMODULIN</scope>
</reference>
<reference key="5">
    <citation type="journal article" date="2004" name="Plant Physiol.">
        <title>Immunophilins and parvulins. Superfamily of peptidyl prolyl isomerases in Arabidopsis.</title>
        <authorList>
            <person name="He Z."/>
            <person name="Li L."/>
            <person name="Luan S."/>
        </authorList>
    </citation>
    <scope>GENE FAMILY</scope>
    <scope>NOMENCLATURE</scope>
</reference>
<reference key="6">
    <citation type="journal article" date="2007" name="Plant Mol. Biol.">
        <title>Arabidopsis immunophilins ROF1 (AtFKBP62) and ROF2 (AtFKBP65) exhibit tissue specificity, are heat-stress induced, and bind HSP90.</title>
        <authorList>
            <person name="Aviezer-Hagai K."/>
            <person name="Skovorodnikova J."/>
            <person name="Galigniana M."/>
            <person name="Farchi-Pisanty O."/>
            <person name="Maayan E."/>
            <person name="Bocovza S."/>
            <person name="Efrat Y."/>
            <person name="von Koskull-Doring P."/>
            <person name="Ohad N."/>
            <person name="Breiman A."/>
        </authorList>
    </citation>
    <scope>FUNCTION</scope>
    <scope>INDUCTION BY HEAT</scope>
    <scope>TISSUE SPECIFICITY</scope>
    <scope>INTERACTION WITH HSP90</scope>
    <scope>MUTAGENESIS OF LYS-484</scope>
</reference>
<reference key="7">
    <citation type="journal article" date="2009" name="Plant J.">
        <title>Arabidopsis ROF1 (FKBP62) modulates thermotolerance by interacting with HSP90.1 and affecting the accumulation of HsfA2-regulated sHSPs.</title>
        <authorList>
            <person name="Meiri D."/>
            <person name="Breiman A."/>
        </authorList>
    </citation>
    <scope>FUNCTION</scope>
    <scope>SUBCELLULAR LOCATION</scope>
    <scope>INTERACTION WITH HSP90-1</scope>
</reference>
<reference key="8">
    <citation type="journal article" date="2010" name="Plant Mol. Biol.">
        <title>Involvement of Arabidopsis ROF2 (FKBP65) in thermotolerance.</title>
        <authorList>
            <person name="Meiri D."/>
            <person name="Tazat K."/>
            <person name="Cohen-Peer R."/>
            <person name="Farchi-Pisanty O."/>
            <person name="Aviezer-Hagai K."/>
            <person name="Avni A."/>
            <person name="Breiman A."/>
        </authorList>
    </citation>
    <scope>INTERACTION WITH FKBP65</scope>
</reference>
<reference key="9">
    <citation type="journal article" date="2012" name="Mol. Cell. Proteomics">
        <title>Comparative large-scale characterisation of plant vs. mammal proteins reveals similar and idiosyncratic N-alpha acetylation features.</title>
        <authorList>
            <person name="Bienvenut W.V."/>
            <person name="Sumpton D."/>
            <person name="Martinez A."/>
            <person name="Lilla S."/>
            <person name="Espagne C."/>
            <person name="Meinnel T."/>
            <person name="Giglione C."/>
        </authorList>
    </citation>
    <scope>ACETYLATION [LARGE SCALE ANALYSIS] AT MET-1</scope>
    <scope>IDENTIFICATION BY MASS SPECTROMETRY [LARGE SCALE ANALYSIS]</scope>
</reference>
<accession>Q38931</accession>
<accession>Q38949</accession>
<accession>Q9LSF3</accession>
<gene>
    <name type="primary">FKBP62</name>
    <name type="synonym">ROF1</name>
    <name type="ordered locus">At3g25230</name>
    <name type="ORF">MJL12.19</name>
</gene>
<evidence type="ECO:0000250" key="1"/>
<evidence type="ECO:0000255" key="2"/>
<evidence type="ECO:0000255" key="3">
    <source>
        <dbReference type="PROSITE-ProRule" id="PRU00277"/>
    </source>
</evidence>
<evidence type="ECO:0000256" key="4">
    <source>
        <dbReference type="SAM" id="MobiDB-lite"/>
    </source>
</evidence>
<evidence type="ECO:0000269" key="5">
    <source>
    </source>
</evidence>
<evidence type="ECO:0000269" key="6">
    <source>
    </source>
</evidence>
<evidence type="ECO:0000269" key="7">
    <source>
    </source>
</evidence>
<evidence type="ECO:0000269" key="8">
    <source>
    </source>
</evidence>
<evidence type="ECO:0000305" key="9"/>
<evidence type="ECO:0007744" key="10">
    <source>
    </source>
</evidence>
<dbReference type="EC" id="5.2.1.8"/>
<dbReference type="EMBL" id="U49453">
    <property type="protein sequence ID" value="AAB82061.1"/>
    <property type="molecule type" value="mRNA"/>
</dbReference>
<dbReference type="EMBL" id="U57838">
    <property type="protein sequence ID" value="AAB82062.1"/>
    <property type="molecule type" value="Genomic_DNA"/>
</dbReference>
<dbReference type="EMBL" id="AB026647">
    <property type="protein sequence ID" value="BAB02082.1"/>
    <property type="status" value="ALT_SEQ"/>
    <property type="molecule type" value="Genomic_DNA"/>
</dbReference>
<dbReference type="EMBL" id="CP002686">
    <property type="protein sequence ID" value="AEE76996.1"/>
    <property type="molecule type" value="Genomic_DNA"/>
</dbReference>
<dbReference type="PIR" id="S72485">
    <property type="entry name" value="S72485"/>
</dbReference>
<dbReference type="RefSeq" id="NP_189160.3">
    <molecule id="Q38931-1"/>
    <property type="nucleotide sequence ID" value="NM_113429.5"/>
</dbReference>
<dbReference type="SMR" id="Q38931"/>
<dbReference type="BioGRID" id="7448">
    <property type="interactions" value="9"/>
</dbReference>
<dbReference type="FunCoup" id="Q38931">
    <property type="interactions" value="2686"/>
</dbReference>
<dbReference type="IntAct" id="Q38931">
    <property type="interactions" value="4"/>
</dbReference>
<dbReference type="MINT" id="Q38931"/>
<dbReference type="STRING" id="3702.Q38931"/>
<dbReference type="iPTMnet" id="Q38931"/>
<dbReference type="PaxDb" id="3702-AT3G25230.2"/>
<dbReference type="EnsemblPlants" id="AT3G25230.1">
    <molecule id="Q38931-1"/>
    <property type="protein sequence ID" value="AT3G25230.1"/>
    <property type="gene ID" value="AT3G25230"/>
</dbReference>
<dbReference type="GeneID" id="822117"/>
<dbReference type="Gramene" id="AT3G25230.1">
    <molecule id="Q38931-1"/>
    <property type="protein sequence ID" value="AT3G25230.1"/>
    <property type="gene ID" value="AT3G25230"/>
</dbReference>
<dbReference type="KEGG" id="ath:AT3G25230"/>
<dbReference type="Araport" id="AT3G25230"/>
<dbReference type="TAIR" id="AT3G25230">
    <property type="gene designation" value="ROF1"/>
</dbReference>
<dbReference type="eggNOG" id="KOG0543">
    <property type="taxonomic scope" value="Eukaryota"/>
</dbReference>
<dbReference type="HOGENOM" id="CLU_013615_13_4_1"/>
<dbReference type="InParanoid" id="Q38931"/>
<dbReference type="OMA" id="FGAEGNE"/>
<dbReference type="PhylomeDB" id="Q38931"/>
<dbReference type="CD-CODE" id="4299E36E">
    <property type="entry name" value="Nucleolus"/>
</dbReference>
<dbReference type="PRO" id="PR:Q38931"/>
<dbReference type="Proteomes" id="UP000006548">
    <property type="component" value="Chromosome 3"/>
</dbReference>
<dbReference type="ExpressionAtlas" id="Q38931">
    <property type="expression patterns" value="baseline and differential"/>
</dbReference>
<dbReference type="GO" id="GO:0005737">
    <property type="term" value="C:cytoplasm"/>
    <property type="evidence" value="ECO:0007669"/>
    <property type="project" value="UniProtKB-SubCell"/>
</dbReference>
<dbReference type="GO" id="GO:0005634">
    <property type="term" value="C:nucleus"/>
    <property type="evidence" value="ECO:0007669"/>
    <property type="project" value="UniProtKB-SubCell"/>
</dbReference>
<dbReference type="GO" id="GO:0005516">
    <property type="term" value="F:calmodulin binding"/>
    <property type="evidence" value="ECO:0007669"/>
    <property type="project" value="UniProtKB-KW"/>
</dbReference>
<dbReference type="GO" id="GO:0003755">
    <property type="term" value="F:peptidyl-prolyl cis-trans isomerase activity"/>
    <property type="evidence" value="ECO:0007669"/>
    <property type="project" value="UniProtKB-KW"/>
</dbReference>
<dbReference type="GO" id="GO:0070370">
    <property type="term" value="P:cellular heat acclimation"/>
    <property type="evidence" value="ECO:0000315"/>
    <property type="project" value="UniProtKB"/>
</dbReference>
<dbReference type="FunFam" id="1.25.40.10:FF:000008">
    <property type="entry name" value="Peptidylprolyl isomerase"/>
    <property type="match status" value="1"/>
</dbReference>
<dbReference type="FunFam" id="3.10.50.40:FF:000012">
    <property type="entry name" value="Peptidylprolyl isomerase"/>
    <property type="match status" value="1"/>
</dbReference>
<dbReference type="FunFam" id="3.10.50.40:FF:000017">
    <property type="entry name" value="Peptidylprolyl isomerase"/>
    <property type="match status" value="1"/>
</dbReference>
<dbReference type="FunFam" id="3.10.50.40:FF:000022">
    <property type="entry name" value="Peptidylprolyl isomerase"/>
    <property type="match status" value="1"/>
</dbReference>
<dbReference type="Gene3D" id="3.10.50.40">
    <property type="match status" value="3"/>
</dbReference>
<dbReference type="Gene3D" id="1.25.40.10">
    <property type="entry name" value="Tetratricopeptide repeat domain"/>
    <property type="match status" value="1"/>
</dbReference>
<dbReference type="InterPro" id="IPR050754">
    <property type="entry name" value="FKBP4/5/8-like"/>
</dbReference>
<dbReference type="InterPro" id="IPR046357">
    <property type="entry name" value="PPIase_dom_sf"/>
</dbReference>
<dbReference type="InterPro" id="IPR001179">
    <property type="entry name" value="PPIase_FKBP_dom"/>
</dbReference>
<dbReference type="InterPro" id="IPR011990">
    <property type="entry name" value="TPR-like_helical_dom_sf"/>
</dbReference>
<dbReference type="InterPro" id="IPR019734">
    <property type="entry name" value="TPR_rpt"/>
</dbReference>
<dbReference type="PANTHER" id="PTHR46512">
    <property type="entry name" value="PEPTIDYLPROLYL ISOMERASE"/>
    <property type="match status" value="1"/>
</dbReference>
<dbReference type="PANTHER" id="PTHR46512:SF9">
    <property type="entry name" value="PEPTIDYLPROLYL ISOMERASE"/>
    <property type="match status" value="1"/>
</dbReference>
<dbReference type="Pfam" id="PF00254">
    <property type="entry name" value="FKBP_C"/>
    <property type="match status" value="3"/>
</dbReference>
<dbReference type="Pfam" id="PF00515">
    <property type="entry name" value="TPR_1"/>
    <property type="match status" value="1"/>
</dbReference>
<dbReference type="SMART" id="SM00028">
    <property type="entry name" value="TPR"/>
    <property type="match status" value="3"/>
</dbReference>
<dbReference type="SUPFAM" id="SSF54534">
    <property type="entry name" value="FKBP-like"/>
    <property type="match status" value="3"/>
</dbReference>
<dbReference type="SUPFAM" id="SSF48452">
    <property type="entry name" value="TPR-like"/>
    <property type="match status" value="1"/>
</dbReference>
<dbReference type="PROSITE" id="PS50059">
    <property type="entry name" value="FKBP_PPIASE"/>
    <property type="match status" value="3"/>
</dbReference>
<dbReference type="PROSITE" id="PS50005">
    <property type="entry name" value="TPR"/>
    <property type="match status" value="3"/>
</dbReference>
<dbReference type="PROSITE" id="PS50293">
    <property type="entry name" value="TPR_REGION"/>
    <property type="match status" value="1"/>
</dbReference>
<sequence>MDANFEMPPVGGMNDDDDMDFGDGASFLKVGEEKEIQQGLKKKLLKEGEGYETPENGDEVEVHYTGTLLDGTKFDSSRDRATPFKFTLGQGQVIKGWDIGIKTMKKGENAVFTIPAELAYGESGSPPTIPANATLQFDVELLKWDSVKDICKDGGVFKKILAVGEKWENPKDLDEVLVKFEAKLEDGTVVGKSDGVEFTVKDGHFCPALTKAVKTMKKGEKVLLTVKPQYGFGEKGKPASAGEGAVPPNATLEINLELVSWKTVSEVTDDNKVVKKVLKEGDGYERPNEGAVVKVKLIGKLQDGTVFLKKGHGENEEPFEFKTDEEQVVDGLDRAVMKMKKGEVALVTIDPEYAFGSNESQQELAVVPPNSTVTYEVDLLTFDKERESWDMNTEEKIEAASKKKEEGNSKFKGGKYSLASKRYEKAVKFIEYDTSFSEEEKKQAKALKVACNLNDAACKLKLKDYKQAEKLCTKVLELESTNVKALYRRAQAYMELSDLDLAEFDVKKALEIDPNNREVKLEQKRLKEKMKEFNKKEAKFYGNMFAKLSKE</sequence>
<proteinExistence type="evidence at protein level"/>
<comment type="function">
    <text evidence="1 5 6">PPIases accelerate the folding of proteins. It catalyzes the cis-trans isomerization of proline imidic peptide bonds in oligopeptides (By similarity). Co-chaperone that positively modulates thermotolerance by interacting with HSP90.1 and increasing the HSFA2-mediated accumulation of chaperones of the small-HSPs family.</text>
</comment>
<comment type="catalytic activity">
    <reaction>
        <text>[protein]-peptidylproline (omega=180) = [protein]-peptidylproline (omega=0)</text>
        <dbReference type="Rhea" id="RHEA:16237"/>
        <dbReference type="Rhea" id="RHEA-COMP:10747"/>
        <dbReference type="Rhea" id="RHEA-COMP:10748"/>
        <dbReference type="ChEBI" id="CHEBI:83833"/>
        <dbReference type="ChEBI" id="CHEBI:83834"/>
        <dbReference type="EC" id="5.2.1.8"/>
    </reaction>
</comment>
<comment type="subunit">
    <text evidence="5 6 7">This PPIase probably binds calmodulin. Interacts with HSP90-1. Forms heterodimers with FKBP65/ROF2.</text>
</comment>
<comment type="interaction">
    <interactant intactId="EBI-2409351">
        <id>Q38931</id>
    </interactant>
    <interactant intactId="EBI-2620253">
        <id>Q9FJL3</id>
        <label>FKBP65</label>
    </interactant>
    <organismsDiffer>false</organismsDiffer>
    <experiments>3</experiments>
</comment>
<comment type="interaction">
    <interactant intactId="EBI-2409351">
        <id>Q38931</id>
    </interactant>
    <interactant intactId="EBI-1778266">
        <id>P27323</id>
        <label>HSP90-1</label>
    </interactant>
    <organismsDiffer>false</organismsDiffer>
    <experiments>4</experiments>
</comment>
<comment type="interaction">
    <interactant intactId="EBI-2409351">
        <id>Q38931</id>
    </interactant>
    <interactant intactId="EBI-7498167">
        <id>D6RUV9</id>
        <label>AGO1</label>
    </interactant>
    <organismsDiffer>true</organismsDiffer>
    <experiments>2</experiments>
</comment>
<comment type="subcellular location">
    <subcellularLocation>
        <location evidence="6">Cytoplasm</location>
    </subcellularLocation>
    <subcellularLocation>
        <location evidence="6">Nucleus</location>
    </subcellularLocation>
    <text>Relocalization from the cytoplasm into the nucleus is induced by heat shock and in association with HSFA2.</text>
</comment>
<comment type="alternative products">
    <event type="alternative splicing"/>
    <isoform>
        <id>Q38931-1</id>
        <name>1</name>
        <sequence type="displayed"/>
    </isoform>
    <text>A number of isoforms are produced. According to EST sequences.</text>
</comment>
<comment type="tissue specificity">
    <text evidence="5 8">Expressed at low levels in roots, stems, leaves and flowers. Detected in the vascular elements of roots, in hydathodes and trichomes of leaves and in stigma, sepals, and anthers.</text>
</comment>
<comment type="induction">
    <text evidence="5 8">By wounding, NaCl and by heat shock.</text>
</comment>
<comment type="similarity">
    <text evidence="9">Belongs to the FKBP-type PPIase family.</text>
</comment>
<comment type="sequence caution" evidence="9">
    <conflict type="erroneous gene model prediction">
        <sequence resource="EMBL-CDS" id="BAB02082"/>
    </conflict>
</comment>
<organism>
    <name type="scientific">Arabidopsis thaliana</name>
    <name type="common">Mouse-ear cress</name>
    <dbReference type="NCBI Taxonomy" id="3702"/>
    <lineage>
        <taxon>Eukaryota</taxon>
        <taxon>Viridiplantae</taxon>
        <taxon>Streptophyta</taxon>
        <taxon>Embryophyta</taxon>
        <taxon>Tracheophyta</taxon>
        <taxon>Spermatophyta</taxon>
        <taxon>Magnoliopsida</taxon>
        <taxon>eudicotyledons</taxon>
        <taxon>Gunneridae</taxon>
        <taxon>Pentapetalae</taxon>
        <taxon>rosids</taxon>
        <taxon>malvids</taxon>
        <taxon>Brassicales</taxon>
        <taxon>Brassicaceae</taxon>
        <taxon>Camelineae</taxon>
        <taxon>Arabidopsis</taxon>
    </lineage>
</organism>